<name>SYV_PYRHO</name>
<proteinExistence type="inferred from homology"/>
<reference key="1">
    <citation type="journal article" date="1998" name="DNA Res.">
        <title>Complete sequence and gene organization of the genome of a hyper-thermophilic archaebacterium, Pyrococcus horikoshii OT3.</title>
        <authorList>
            <person name="Kawarabayasi Y."/>
            <person name="Sawada M."/>
            <person name="Horikawa H."/>
            <person name="Haikawa Y."/>
            <person name="Hino Y."/>
            <person name="Yamamoto S."/>
            <person name="Sekine M."/>
            <person name="Baba S."/>
            <person name="Kosugi H."/>
            <person name="Hosoyama A."/>
            <person name="Nagai Y."/>
            <person name="Sakai M."/>
            <person name="Ogura K."/>
            <person name="Otsuka R."/>
            <person name="Nakazawa H."/>
            <person name="Takamiya M."/>
            <person name="Ohfuku Y."/>
            <person name="Funahashi T."/>
            <person name="Tanaka T."/>
            <person name="Kudoh Y."/>
            <person name="Yamazaki J."/>
            <person name="Kushida N."/>
            <person name="Oguchi A."/>
            <person name="Aoki K."/>
            <person name="Yoshizawa T."/>
            <person name="Nakamura Y."/>
            <person name="Robb F.T."/>
            <person name="Horikoshi K."/>
            <person name="Masuchi Y."/>
            <person name="Shizuya H."/>
            <person name="Kikuchi H."/>
        </authorList>
    </citation>
    <scope>NUCLEOTIDE SEQUENCE [LARGE SCALE GENOMIC DNA]</scope>
    <source>
        <strain>ATCC 700860 / DSM 12428 / JCM 9974 / NBRC 100139 / OT-3</strain>
    </source>
</reference>
<protein>
    <recommendedName>
        <fullName evidence="1">Valine--tRNA ligase</fullName>
        <ecNumber evidence="1">6.1.1.9</ecNumber>
    </recommendedName>
    <alternativeName>
        <fullName evidence="1">Valyl-tRNA synthetase</fullName>
        <shortName evidence="1">ValRS</shortName>
    </alternativeName>
</protein>
<comment type="function">
    <text evidence="1">Catalyzes the attachment of valine to tRNA(Val). As ValRS can inadvertently accommodate and process structurally similar amino acids such as threonine, to avoid such errors, it has a 'posttransfer' editing activity that hydrolyzes mischarged Thr-tRNA(Val) in a tRNA-dependent manner.</text>
</comment>
<comment type="catalytic activity">
    <reaction evidence="1">
        <text>tRNA(Val) + L-valine + ATP = L-valyl-tRNA(Val) + AMP + diphosphate</text>
        <dbReference type="Rhea" id="RHEA:10704"/>
        <dbReference type="Rhea" id="RHEA-COMP:9672"/>
        <dbReference type="Rhea" id="RHEA-COMP:9708"/>
        <dbReference type="ChEBI" id="CHEBI:30616"/>
        <dbReference type="ChEBI" id="CHEBI:33019"/>
        <dbReference type="ChEBI" id="CHEBI:57762"/>
        <dbReference type="ChEBI" id="CHEBI:78442"/>
        <dbReference type="ChEBI" id="CHEBI:78537"/>
        <dbReference type="ChEBI" id="CHEBI:456215"/>
        <dbReference type="EC" id="6.1.1.9"/>
    </reaction>
</comment>
<comment type="subcellular location">
    <subcellularLocation>
        <location evidence="1">Cytoplasm</location>
    </subcellularLocation>
</comment>
<comment type="domain">
    <text evidence="1">ValRS has two distinct active sites: one for aminoacylation and one for editing. The misactivated threonine is translocated from the active site to the editing site.</text>
</comment>
<comment type="similarity">
    <text evidence="1">Belongs to the class-I aminoacyl-tRNA synthetase family. ValS type 2 subfamily.</text>
</comment>
<comment type="sequence caution" evidence="2">
    <conflict type="erroneous initiation">
        <sequence resource="EMBL-CDS" id="BAA29387"/>
    </conflict>
</comment>
<keyword id="KW-0030">Aminoacyl-tRNA synthetase</keyword>
<keyword id="KW-0067">ATP-binding</keyword>
<keyword id="KW-0963">Cytoplasm</keyword>
<keyword id="KW-0436">Ligase</keyword>
<keyword id="KW-0547">Nucleotide-binding</keyword>
<keyword id="KW-0648">Protein biosynthesis</keyword>
<feature type="chain" id="PRO_0000106252" description="Valine--tRNA ligase">
    <location>
        <begin position="1"/>
        <end position="891"/>
    </location>
</feature>
<feature type="short sequence motif" description="'HIGH' region">
    <location>
        <begin position="43"/>
        <end position="53"/>
    </location>
</feature>
<feature type="short sequence motif" description="'KMSKS' region">
    <location>
        <begin position="536"/>
        <end position="540"/>
    </location>
</feature>
<feature type="binding site" evidence="1">
    <location>
        <position position="539"/>
    </location>
    <ligand>
        <name>ATP</name>
        <dbReference type="ChEBI" id="CHEBI:30616"/>
    </ligand>
</feature>
<accession>O58052</accession>
<evidence type="ECO:0000255" key="1">
    <source>
        <dbReference type="HAMAP-Rule" id="MF_02005"/>
    </source>
</evidence>
<evidence type="ECO:0000305" key="2"/>
<gene>
    <name evidence="1" type="primary">valS</name>
    <name type="ordered locus">PH0314</name>
</gene>
<sequence length="891" mass="104961">MLPKNYDPNEIEPKWQKYWLEEKIYKYRLDENKPSYAIDTPPPFTSGTLHLGHVLSHTWIDIIARYKRMRGYNVLFPQGFDNHGLPTELKVEKEFGITKDQPEEFLKKCVEWTWQAIEAMRKQFIRIGYSADWDLEYHTMDDWYKAAVQRSLLEFYKKGLIYREEHPVYWCPKCRTSLAKAEVGYVEEEGYLYYIKLPLADGSGYIPIATTRPELMPACVAVFVHPDDERYKHLVGKKVKLPIFEREVPILADEDVDPNFGTGAVYNCTYGDEQDIVWQKRYNLPVIIVINEDGTMNENAGPYAGLKIEEARKKIAEDLEKMGLLYKKEKIKHRVLRHTERSSCMAPIELLPKKQWFIKVKDLIDEIIKVAKEINWYPEDMFLRLKDWAESMDWDWVISRQRVFGTPFPFWVCKNGHIIPAREEDLPVDPRFDKPPVDKCPVCGAEIEPVTDVLDCWVDSSITPLIITKWHEAIKGDEEAKKWFEHNFPTALRPQGTDIIRTWAFYTILRTYVLTGKKPWKDIVINGMVAGPDGRKMSKSYGNVVSPEEVIPKYGADALRLWTALAPPGEDHPFKWETVDYNYRFLQKVWNIYRFAERHIKDFDYEKYRDVELEPLDKWILSRLHRIIKFATEELERYRFNLITRELITFIWHEVADDYIEMIKYRLYGEDEESKLKAKVALYELLYNVMLLLAPFVPHITEEIYHAIFKEKIGEKSVHLLSWPEYREDRIDEEAEKIGELARKIVSEMRKYKNSHGLPLNAKLKHVAIYALDSYERLKLIERDIAGTMNIERLEIVKGEPHLEERIVEVKPNYKNIGPKYGKLVPRIVQYLRENAESIVREIKEKGKAEFEVEGKKVELTKEDITVRKEVFSEGEKVETSVVDDVVIVFF</sequence>
<dbReference type="EC" id="6.1.1.9" evidence="1"/>
<dbReference type="EMBL" id="BA000001">
    <property type="protein sequence ID" value="BAA29387.1"/>
    <property type="status" value="ALT_INIT"/>
    <property type="molecule type" value="Genomic_DNA"/>
</dbReference>
<dbReference type="PIR" id="D71457">
    <property type="entry name" value="D71457"/>
</dbReference>
<dbReference type="RefSeq" id="WP_048053083.1">
    <property type="nucleotide sequence ID" value="NC_000961.1"/>
</dbReference>
<dbReference type="SMR" id="O58052"/>
<dbReference type="STRING" id="70601.gene:9377232"/>
<dbReference type="EnsemblBacteria" id="BAA29387">
    <property type="protein sequence ID" value="BAA29387"/>
    <property type="gene ID" value="BAA29387"/>
</dbReference>
<dbReference type="GeneID" id="1444193"/>
<dbReference type="KEGG" id="pho:PH0314"/>
<dbReference type="eggNOG" id="arCOG00808">
    <property type="taxonomic scope" value="Archaea"/>
</dbReference>
<dbReference type="OrthoDB" id="23906at2157"/>
<dbReference type="Proteomes" id="UP000000752">
    <property type="component" value="Chromosome"/>
</dbReference>
<dbReference type="GO" id="GO:0005829">
    <property type="term" value="C:cytosol"/>
    <property type="evidence" value="ECO:0007669"/>
    <property type="project" value="TreeGrafter"/>
</dbReference>
<dbReference type="GO" id="GO:0002161">
    <property type="term" value="F:aminoacyl-tRNA deacylase activity"/>
    <property type="evidence" value="ECO:0007669"/>
    <property type="project" value="InterPro"/>
</dbReference>
<dbReference type="GO" id="GO:0005524">
    <property type="term" value="F:ATP binding"/>
    <property type="evidence" value="ECO:0007669"/>
    <property type="project" value="UniProtKB-UniRule"/>
</dbReference>
<dbReference type="GO" id="GO:0004832">
    <property type="term" value="F:valine-tRNA ligase activity"/>
    <property type="evidence" value="ECO:0007669"/>
    <property type="project" value="UniProtKB-UniRule"/>
</dbReference>
<dbReference type="GO" id="GO:0006438">
    <property type="term" value="P:valyl-tRNA aminoacylation"/>
    <property type="evidence" value="ECO:0007669"/>
    <property type="project" value="UniProtKB-UniRule"/>
</dbReference>
<dbReference type="CDD" id="cd07962">
    <property type="entry name" value="Anticodon_Ia_Val"/>
    <property type="match status" value="1"/>
</dbReference>
<dbReference type="CDD" id="cd00817">
    <property type="entry name" value="ValRS_core"/>
    <property type="match status" value="1"/>
</dbReference>
<dbReference type="FunFam" id="1.10.730.10:FF:000033">
    <property type="entry name" value="Valine--tRNA ligase"/>
    <property type="match status" value="1"/>
</dbReference>
<dbReference type="FunFam" id="3.40.50.620:FF:000192">
    <property type="entry name" value="Valine--tRNA ligase"/>
    <property type="match status" value="1"/>
</dbReference>
<dbReference type="Gene3D" id="3.30.720.200">
    <property type="match status" value="1"/>
</dbReference>
<dbReference type="Gene3D" id="3.40.50.620">
    <property type="entry name" value="HUPs"/>
    <property type="match status" value="2"/>
</dbReference>
<dbReference type="Gene3D" id="1.10.730.10">
    <property type="entry name" value="Isoleucyl-tRNA Synthetase, Domain 1"/>
    <property type="match status" value="1"/>
</dbReference>
<dbReference type="Gene3D" id="3.90.740.10">
    <property type="entry name" value="Valyl/Leucyl/Isoleucyl-tRNA synthetase, editing domain"/>
    <property type="match status" value="1"/>
</dbReference>
<dbReference type="HAMAP" id="MF_02005">
    <property type="entry name" value="Val_tRNA_synth_type2"/>
    <property type="match status" value="1"/>
</dbReference>
<dbReference type="InterPro" id="IPR001412">
    <property type="entry name" value="aa-tRNA-synth_I_CS"/>
</dbReference>
<dbReference type="InterPro" id="IPR002300">
    <property type="entry name" value="aa-tRNA-synth_Ia"/>
</dbReference>
<dbReference type="InterPro" id="IPR033705">
    <property type="entry name" value="Anticodon_Ia_Val"/>
</dbReference>
<dbReference type="InterPro" id="IPR013155">
    <property type="entry name" value="M/V/L/I-tRNA-synth_anticd-bd"/>
</dbReference>
<dbReference type="InterPro" id="IPR014729">
    <property type="entry name" value="Rossmann-like_a/b/a_fold"/>
</dbReference>
<dbReference type="InterPro" id="IPR009080">
    <property type="entry name" value="tRNAsynth_Ia_anticodon-bd"/>
</dbReference>
<dbReference type="InterPro" id="IPR009008">
    <property type="entry name" value="Val/Leu/Ile-tRNA-synth_edit"/>
</dbReference>
<dbReference type="InterPro" id="IPR022874">
    <property type="entry name" value="Valine-tRNA_ligase_type_2"/>
</dbReference>
<dbReference type="InterPro" id="IPR002303">
    <property type="entry name" value="Valyl-tRNA_ligase"/>
</dbReference>
<dbReference type="NCBIfam" id="NF009687">
    <property type="entry name" value="PRK13208.1"/>
    <property type="match status" value="1"/>
</dbReference>
<dbReference type="NCBIfam" id="TIGR00422">
    <property type="entry name" value="valS"/>
    <property type="match status" value="1"/>
</dbReference>
<dbReference type="PANTHER" id="PTHR11946:SF93">
    <property type="entry name" value="VALINE--TRNA LIGASE, CHLOROPLASTIC_MITOCHONDRIAL 2"/>
    <property type="match status" value="1"/>
</dbReference>
<dbReference type="PANTHER" id="PTHR11946">
    <property type="entry name" value="VALYL-TRNA SYNTHETASES"/>
    <property type="match status" value="1"/>
</dbReference>
<dbReference type="Pfam" id="PF08264">
    <property type="entry name" value="Anticodon_1"/>
    <property type="match status" value="1"/>
</dbReference>
<dbReference type="Pfam" id="PF19302">
    <property type="entry name" value="DUF5915"/>
    <property type="match status" value="1"/>
</dbReference>
<dbReference type="Pfam" id="PF00133">
    <property type="entry name" value="tRNA-synt_1"/>
    <property type="match status" value="1"/>
</dbReference>
<dbReference type="PRINTS" id="PR00986">
    <property type="entry name" value="TRNASYNTHVAL"/>
</dbReference>
<dbReference type="SUPFAM" id="SSF47323">
    <property type="entry name" value="Anticodon-binding domain of a subclass of class I aminoacyl-tRNA synthetases"/>
    <property type="match status" value="1"/>
</dbReference>
<dbReference type="SUPFAM" id="SSF52374">
    <property type="entry name" value="Nucleotidylyl transferase"/>
    <property type="match status" value="1"/>
</dbReference>
<dbReference type="SUPFAM" id="SSF50677">
    <property type="entry name" value="ValRS/IleRS/LeuRS editing domain"/>
    <property type="match status" value="1"/>
</dbReference>
<dbReference type="PROSITE" id="PS00178">
    <property type="entry name" value="AA_TRNA_LIGASE_I"/>
    <property type="match status" value="1"/>
</dbReference>
<organism>
    <name type="scientific">Pyrococcus horikoshii (strain ATCC 700860 / DSM 12428 / JCM 9974 / NBRC 100139 / OT-3)</name>
    <dbReference type="NCBI Taxonomy" id="70601"/>
    <lineage>
        <taxon>Archaea</taxon>
        <taxon>Methanobacteriati</taxon>
        <taxon>Methanobacteriota</taxon>
        <taxon>Thermococci</taxon>
        <taxon>Thermococcales</taxon>
        <taxon>Thermococcaceae</taxon>
        <taxon>Pyrococcus</taxon>
    </lineage>
</organism>